<gene>
    <name evidence="1" type="primary">rplA</name>
    <name type="ordered locus">Rpal_3691</name>
</gene>
<protein>
    <recommendedName>
        <fullName evidence="1">Large ribosomal subunit protein uL1</fullName>
    </recommendedName>
    <alternativeName>
        <fullName evidence="2">50S ribosomal protein L1</fullName>
    </alternativeName>
</protein>
<dbReference type="EMBL" id="CP001096">
    <property type="protein sequence ID" value="ACF02191.1"/>
    <property type="molecule type" value="Genomic_DNA"/>
</dbReference>
<dbReference type="RefSeq" id="WP_012496664.1">
    <property type="nucleotide sequence ID" value="NC_011004.1"/>
</dbReference>
<dbReference type="SMR" id="B3QC04"/>
<dbReference type="KEGG" id="rpt:Rpal_3691"/>
<dbReference type="HOGENOM" id="CLU_062853_0_0_5"/>
<dbReference type="OrthoDB" id="9803740at2"/>
<dbReference type="Proteomes" id="UP000001725">
    <property type="component" value="Chromosome"/>
</dbReference>
<dbReference type="GO" id="GO:0022625">
    <property type="term" value="C:cytosolic large ribosomal subunit"/>
    <property type="evidence" value="ECO:0007669"/>
    <property type="project" value="TreeGrafter"/>
</dbReference>
<dbReference type="GO" id="GO:0019843">
    <property type="term" value="F:rRNA binding"/>
    <property type="evidence" value="ECO:0007669"/>
    <property type="project" value="UniProtKB-UniRule"/>
</dbReference>
<dbReference type="GO" id="GO:0003735">
    <property type="term" value="F:structural constituent of ribosome"/>
    <property type="evidence" value="ECO:0007669"/>
    <property type="project" value="InterPro"/>
</dbReference>
<dbReference type="GO" id="GO:0000049">
    <property type="term" value="F:tRNA binding"/>
    <property type="evidence" value="ECO:0007669"/>
    <property type="project" value="UniProtKB-KW"/>
</dbReference>
<dbReference type="GO" id="GO:0006417">
    <property type="term" value="P:regulation of translation"/>
    <property type="evidence" value="ECO:0007669"/>
    <property type="project" value="UniProtKB-KW"/>
</dbReference>
<dbReference type="GO" id="GO:0006412">
    <property type="term" value="P:translation"/>
    <property type="evidence" value="ECO:0007669"/>
    <property type="project" value="UniProtKB-UniRule"/>
</dbReference>
<dbReference type="CDD" id="cd00403">
    <property type="entry name" value="Ribosomal_L1"/>
    <property type="match status" value="1"/>
</dbReference>
<dbReference type="FunFam" id="3.40.50.790:FF:000001">
    <property type="entry name" value="50S ribosomal protein L1"/>
    <property type="match status" value="1"/>
</dbReference>
<dbReference type="Gene3D" id="3.30.190.20">
    <property type="match status" value="1"/>
</dbReference>
<dbReference type="Gene3D" id="3.40.50.790">
    <property type="match status" value="1"/>
</dbReference>
<dbReference type="HAMAP" id="MF_01318_B">
    <property type="entry name" value="Ribosomal_uL1_B"/>
    <property type="match status" value="1"/>
</dbReference>
<dbReference type="InterPro" id="IPR005878">
    <property type="entry name" value="Ribosom_uL1_bac-type"/>
</dbReference>
<dbReference type="InterPro" id="IPR002143">
    <property type="entry name" value="Ribosomal_uL1"/>
</dbReference>
<dbReference type="InterPro" id="IPR023674">
    <property type="entry name" value="Ribosomal_uL1-like"/>
</dbReference>
<dbReference type="InterPro" id="IPR028364">
    <property type="entry name" value="Ribosomal_uL1/biogenesis"/>
</dbReference>
<dbReference type="InterPro" id="IPR016095">
    <property type="entry name" value="Ribosomal_uL1_3-a/b-sand"/>
</dbReference>
<dbReference type="InterPro" id="IPR023673">
    <property type="entry name" value="Ribosomal_uL1_CS"/>
</dbReference>
<dbReference type="NCBIfam" id="TIGR01169">
    <property type="entry name" value="rplA_bact"/>
    <property type="match status" value="1"/>
</dbReference>
<dbReference type="PANTHER" id="PTHR36427">
    <property type="entry name" value="54S RIBOSOMAL PROTEIN L1, MITOCHONDRIAL"/>
    <property type="match status" value="1"/>
</dbReference>
<dbReference type="PANTHER" id="PTHR36427:SF3">
    <property type="entry name" value="LARGE RIBOSOMAL SUBUNIT PROTEIN UL1M"/>
    <property type="match status" value="1"/>
</dbReference>
<dbReference type="Pfam" id="PF00687">
    <property type="entry name" value="Ribosomal_L1"/>
    <property type="match status" value="1"/>
</dbReference>
<dbReference type="PIRSF" id="PIRSF002155">
    <property type="entry name" value="Ribosomal_L1"/>
    <property type="match status" value="1"/>
</dbReference>
<dbReference type="SUPFAM" id="SSF56808">
    <property type="entry name" value="Ribosomal protein L1"/>
    <property type="match status" value="1"/>
</dbReference>
<dbReference type="PROSITE" id="PS01199">
    <property type="entry name" value="RIBOSOMAL_L1"/>
    <property type="match status" value="1"/>
</dbReference>
<keyword id="KW-0678">Repressor</keyword>
<keyword id="KW-0687">Ribonucleoprotein</keyword>
<keyword id="KW-0689">Ribosomal protein</keyword>
<keyword id="KW-0694">RNA-binding</keyword>
<keyword id="KW-0699">rRNA-binding</keyword>
<keyword id="KW-0810">Translation regulation</keyword>
<keyword id="KW-0820">tRNA-binding</keyword>
<comment type="function">
    <text evidence="1">Binds directly to 23S rRNA. The L1 stalk is quite mobile in the ribosome, and is involved in E site tRNA release.</text>
</comment>
<comment type="function">
    <text evidence="1">Protein L1 is also a translational repressor protein, it controls the translation of the L11 operon by binding to its mRNA.</text>
</comment>
<comment type="subunit">
    <text evidence="1">Part of the 50S ribosomal subunit.</text>
</comment>
<comment type="similarity">
    <text evidence="1">Belongs to the universal ribosomal protein uL1 family.</text>
</comment>
<organism>
    <name type="scientific">Rhodopseudomonas palustris (strain TIE-1)</name>
    <dbReference type="NCBI Taxonomy" id="395960"/>
    <lineage>
        <taxon>Bacteria</taxon>
        <taxon>Pseudomonadati</taxon>
        <taxon>Pseudomonadota</taxon>
        <taxon>Alphaproteobacteria</taxon>
        <taxon>Hyphomicrobiales</taxon>
        <taxon>Nitrobacteraceae</taxon>
        <taxon>Rhodopseudomonas</taxon>
    </lineage>
</organism>
<feature type="chain" id="PRO_1000141451" description="Large ribosomal subunit protein uL1">
    <location>
        <begin position="1"/>
        <end position="229"/>
    </location>
</feature>
<name>RL1_RHOPT</name>
<accession>B3QC04</accession>
<reference key="1">
    <citation type="submission" date="2008-05" db="EMBL/GenBank/DDBJ databases">
        <title>Complete sequence of Rhodopseudomonas palustris TIE-1.</title>
        <authorList>
            <consortium name="US DOE Joint Genome Institute"/>
            <person name="Lucas S."/>
            <person name="Copeland A."/>
            <person name="Lapidus A."/>
            <person name="Glavina del Rio T."/>
            <person name="Dalin E."/>
            <person name="Tice H."/>
            <person name="Pitluck S."/>
            <person name="Chain P."/>
            <person name="Malfatti S."/>
            <person name="Shin M."/>
            <person name="Vergez L."/>
            <person name="Lang D."/>
            <person name="Schmutz J."/>
            <person name="Larimer F."/>
            <person name="Land M."/>
            <person name="Hauser L."/>
            <person name="Kyrpides N."/>
            <person name="Mikhailova N."/>
            <person name="Emerson D."/>
            <person name="Newman D.K."/>
            <person name="Roden E."/>
            <person name="Richardson P."/>
        </authorList>
    </citation>
    <scope>NUCLEOTIDE SEQUENCE [LARGE SCALE GENOMIC DNA]</scope>
    <source>
        <strain>TIE-1</strain>
    </source>
</reference>
<evidence type="ECO:0000255" key="1">
    <source>
        <dbReference type="HAMAP-Rule" id="MF_01318"/>
    </source>
</evidence>
<evidence type="ECO:0000305" key="2"/>
<proteinExistence type="inferred from homology"/>
<sequence length="229" mass="24024">MAIGKRLKKIREGIDRTKLYPLDEAVKLVKERAISKFDETIEVAINLGVDPRHADQMVRGVVMLPNGTGRTVRVGVFARGAKADEAKAAGADVVGAEDLVEQVQAGNINFDRCIATPDMMPLVGRLGKVLGPRGMMPNPKIGTVTMDVAGAVKGAKGGSVEFRVEKAGIIQAGVGKASFDADKLVENIKALADAVNKAKPTGAKGTYIQRVAVSSTMGPGVKVEPGTVH</sequence>